<feature type="chain" id="PRO_0000387892" description="4-hydroxy-2-oxovalerate aldolase">
    <location>
        <begin position="1"/>
        <end position="338"/>
    </location>
</feature>
<feature type="domain" description="Pyruvate carboxyltransferase" evidence="1">
    <location>
        <begin position="5"/>
        <end position="257"/>
    </location>
</feature>
<feature type="active site" description="Proton acceptor" evidence="1">
    <location>
        <position position="17"/>
    </location>
</feature>
<feature type="binding site" evidence="1">
    <location>
        <begin position="13"/>
        <end position="14"/>
    </location>
    <ligand>
        <name>substrate</name>
    </ligand>
</feature>
<feature type="binding site" evidence="1">
    <location>
        <position position="14"/>
    </location>
    <ligand>
        <name>Mn(2+)</name>
        <dbReference type="ChEBI" id="CHEBI:29035"/>
    </ligand>
</feature>
<feature type="binding site" evidence="1">
    <location>
        <position position="167"/>
    </location>
    <ligand>
        <name>substrate</name>
    </ligand>
</feature>
<feature type="binding site" evidence="1">
    <location>
        <position position="196"/>
    </location>
    <ligand>
        <name>Mn(2+)</name>
        <dbReference type="ChEBI" id="CHEBI:29035"/>
    </ligand>
</feature>
<feature type="binding site" evidence="1">
    <location>
        <position position="196"/>
    </location>
    <ligand>
        <name>substrate</name>
    </ligand>
</feature>
<feature type="binding site" evidence="1">
    <location>
        <position position="198"/>
    </location>
    <ligand>
        <name>Mn(2+)</name>
        <dbReference type="ChEBI" id="CHEBI:29035"/>
    </ligand>
</feature>
<feature type="binding site" evidence="1">
    <location>
        <position position="287"/>
    </location>
    <ligand>
        <name>substrate</name>
    </ligand>
</feature>
<feature type="site" description="Transition state stabilizer" evidence="1">
    <location>
        <position position="13"/>
    </location>
</feature>
<dbReference type="EC" id="4.1.3.39" evidence="1"/>
<dbReference type="EMBL" id="AL646053">
    <property type="protein sequence ID" value="CAD18046.1"/>
    <property type="molecule type" value="Genomic_DNA"/>
</dbReference>
<dbReference type="RefSeq" id="WP_011004192.1">
    <property type="nucleotide sequence ID" value="NC_003296.1"/>
</dbReference>
<dbReference type="SMR" id="Q8XRF9"/>
<dbReference type="STRING" id="267608.RSp0895"/>
<dbReference type="EnsemblBacteria" id="CAD18046">
    <property type="protein sequence ID" value="CAD18046"/>
    <property type="gene ID" value="RSp0895"/>
</dbReference>
<dbReference type="KEGG" id="rso:RSp0895"/>
<dbReference type="PATRIC" id="fig|267608.8.peg.4371"/>
<dbReference type="eggNOG" id="COG0119">
    <property type="taxonomic scope" value="Bacteria"/>
</dbReference>
<dbReference type="HOGENOM" id="CLU_049173_0_0_4"/>
<dbReference type="Proteomes" id="UP000001436">
    <property type="component" value="Plasmid megaplasmid Rsp"/>
</dbReference>
<dbReference type="GO" id="GO:0003852">
    <property type="term" value="F:2-isopropylmalate synthase activity"/>
    <property type="evidence" value="ECO:0007669"/>
    <property type="project" value="TreeGrafter"/>
</dbReference>
<dbReference type="GO" id="GO:0008701">
    <property type="term" value="F:4-hydroxy-2-oxovalerate aldolase activity"/>
    <property type="evidence" value="ECO:0007669"/>
    <property type="project" value="UniProtKB-UniRule"/>
</dbReference>
<dbReference type="GO" id="GO:0030145">
    <property type="term" value="F:manganese ion binding"/>
    <property type="evidence" value="ECO:0007669"/>
    <property type="project" value="UniProtKB-UniRule"/>
</dbReference>
<dbReference type="GO" id="GO:0009056">
    <property type="term" value="P:catabolic process"/>
    <property type="evidence" value="ECO:0007669"/>
    <property type="project" value="UniProtKB-KW"/>
</dbReference>
<dbReference type="GO" id="GO:0009098">
    <property type="term" value="P:L-leucine biosynthetic process"/>
    <property type="evidence" value="ECO:0007669"/>
    <property type="project" value="TreeGrafter"/>
</dbReference>
<dbReference type="CDD" id="cd07943">
    <property type="entry name" value="DRE_TIM_HOA"/>
    <property type="match status" value="1"/>
</dbReference>
<dbReference type="FunFam" id="1.10.8.60:FF:000042">
    <property type="entry name" value="4-hydroxy-2-oxovalerate aldolase"/>
    <property type="match status" value="1"/>
</dbReference>
<dbReference type="Gene3D" id="1.10.8.60">
    <property type="match status" value="1"/>
</dbReference>
<dbReference type="Gene3D" id="3.20.20.70">
    <property type="entry name" value="Aldolase class I"/>
    <property type="match status" value="1"/>
</dbReference>
<dbReference type="HAMAP" id="MF_01656">
    <property type="entry name" value="HOA"/>
    <property type="match status" value="1"/>
</dbReference>
<dbReference type="InterPro" id="IPR050073">
    <property type="entry name" value="2-IPM_HCS-like"/>
</dbReference>
<dbReference type="InterPro" id="IPR017629">
    <property type="entry name" value="4OH_2_O-val_aldolase"/>
</dbReference>
<dbReference type="InterPro" id="IPR013785">
    <property type="entry name" value="Aldolase_TIM"/>
</dbReference>
<dbReference type="InterPro" id="IPR012425">
    <property type="entry name" value="DmpG_comm"/>
</dbReference>
<dbReference type="InterPro" id="IPR035685">
    <property type="entry name" value="DRE_TIM_HOA"/>
</dbReference>
<dbReference type="InterPro" id="IPR000891">
    <property type="entry name" value="PYR_CT"/>
</dbReference>
<dbReference type="NCBIfam" id="TIGR03217">
    <property type="entry name" value="4OH_2_O_val_ald"/>
    <property type="match status" value="1"/>
</dbReference>
<dbReference type="NCBIfam" id="NF006049">
    <property type="entry name" value="PRK08195.1"/>
    <property type="match status" value="1"/>
</dbReference>
<dbReference type="PANTHER" id="PTHR10277:SF9">
    <property type="entry name" value="2-ISOPROPYLMALATE SYNTHASE 1, CHLOROPLASTIC-RELATED"/>
    <property type="match status" value="1"/>
</dbReference>
<dbReference type="PANTHER" id="PTHR10277">
    <property type="entry name" value="HOMOCITRATE SYNTHASE-RELATED"/>
    <property type="match status" value="1"/>
</dbReference>
<dbReference type="Pfam" id="PF07836">
    <property type="entry name" value="DmpG_comm"/>
    <property type="match status" value="1"/>
</dbReference>
<dbReference type="Pfam" id="PF00682">
    <property type="entry name" value="HMGL-like"/>
    <property type="match status" value="1"/>
</dbReference>
<dbReference type="SUPFAM" id="SSF51569">
    <property type="entry name" value="Aldolase"/>
    <property type="match status" value="1"/>
</dbReference>
<dbReference type="SUPFAM" id="SSF89000">
    <property type="entry name" value="post-HMGL domain-like"/>
    <property type="match status" value="1"/>
</dbReference>
<dbReference type="PROSITE" id="PS50991">
    <property type="entry name" value="PYR_CT"/>
    <property type="match status" value="1"/>
</dbReference>
<geneLocation type="plasmid">
    <name>megaplasmid Rsp</name>
</geneLocation>
<comment type="catalytic activity">
    <reaction evidence="1">
        <text>(S)-4-hydroxy-2-oxopentanoate = acetaldehyde + pyruvate</text>
        <dbReference type="Rhea" id="RHEA:22624"/>
        <dbReference type="ChEBI" id="CHEBI:15343"/>
        <dbReference type="ChEBI" id="CHEBI:15361"/>
        <dbReference type="ChEBI" id="CHEBI:73143"/>
        <dbReference type="EC" id="4.1.3.39"/>
    </reaction>
</comment>
<comment type="similarity">
    <text evidence="1">Belongs to the 4-hydroxy-2-oxovalerate aldolase family.</text>
</comment>
<name>HOA_RALN1</name>
<keyword id="KW-0058">Aromatic hydrocarbons catabolism</keyword>
<keyword id="KW-0456">Lyase</keyword>
<keyword id="KW-0464">Manganese</keyword>
<keyword id="KW-0479">Metal-binding</keyword>
<keyword id="KW-0614">Plasmid</keyword>
<keyword id="KW-1185">Reference proteome</keyword>
<evidence type="ECO:0000255" key="1">
    <source>
        <dbReference type="HAMAP-Rule" id="MF_01656"/>
    </source>
</evidence>
<protein>
    <recommendedName>
        <fullName evidence="1">4-hydroxy-2-oxovalerate aldolase</fullName>
        <shortName evidence="1">HOA</shortName>
        <ecNumber evidence="1">4.1.3.39</ecNumber>
    </recommendedName>
    <alternativeName>
        <fullName evidence="1">4-hydroxy-2-keto-pentanoic acid aldolase</fullName>
    </alternativeName>
    <alternativeName>
        <fullName evidence="1">4-hydroxy-2-oxopentanoate aldolase</fullName>
    </alternativeName>
</protein>
<sequence length="338" mass="36342">MDKTLYISDVTLRDGSHAVRHQYTVAQAVQIAKALDAARVDSIEVAHGDGLAGSSFNYGFGAHTDLEWIAAVAEAVHHARVATLLLPGIGTVHDLRNAHAAGARIVRVATHCTEADVSRQHIETARALGMDTVGFLMMSHMTTPDRLAQEALKMESYGATCIYVVDSGGALGMNDVRERFRALKQVLKPETQTGIHAHHNLSLGVANSIVAVEEGCDRIDASLAGMGAGAGNAPLEVFIAAAQRLGWRHSCDLMALMDAADDIVRPLQDRPVRVDRETLALGYAGVYSSFLRHAEAVAQRHGLKAVDILIELGHRRMVGGQEDMIVDVALDLLQTRTP</sequence>
<organism>
    <name type="scientific">Ralstonia nicotianae (strain ATCC BAA-1114 / GMI1000)</name>
    <name type="common">Ralstonia solanacearum</name>
    <dbReference type="NCBI Taxonomy" id="267608"/>
    <lineage>
        <taxon>Bacteria</taxon>
        <taxon>Pseudomonadati</taxon>
        <taxon>Pseudomonadota</taxon>
        <taxon>Betaproteobacteria</taxon>
        <taxon>Burkholderiales</taxon>
        <taxon>Burkholderiaceae</taxon>
        <taxon>Ralstonia</taxon>
        <taxon>Ralstonia solanacearum species complex</taxon>
    </lineage>
</organism>
<reference key="1">
    <citation type="journal article" date="2002" name="Nature">
        <title>Genome sequence of the plant pathogen Ralstonia solanacearum.</title>
        <authorList>
            <person name="Salanoubat M."/>
            <person name="Genin S."/>
            <person name="Artiguenave F."/>
            <person name="Gouzy J."/>
            <person name="Mangenot S."/>
            <person name="Arlat M."/>
            <person name="Billault A."/>
            <person name="Brottier P."/>
            <person name="Camus J.-C."/>
            <person name="Cattolico L."/>
            <person name="Chandler M."/>
            <person name="Choisne N."/>
            <person name="Claudel-Renard C."/>
            <person name="Cunnac S."/>
            <person name="Demange N."/>
            <person name="Gaspin C."/>
            <person name="Lavie M."/>
            <person name="Moisan A."/>
            <person name="Robert C."/>
            <person name="Saurin W."/>
            <person name="Schiex T."/>
            <person name="Siguier P."/>
            <person name="Thebault P."/>
            <person name="Whalen M."/>
            <person name="Wincker P."/>
            <person name="Levy M."/>
            <person name="Weissenbach J."/>
            <person name="Boucher C.A."/>
        </authorList>
    </citation>
    <scope>NUCLEOTIDE SEQUENCE [LARGE SCALE GENOMIC DNA]</scope>
    <source>
        <strain>ATCC BAA-1114 / GMI1000</strain>
    </source>
</reference>
<accession>Q8XRF9</accession>
<proteinExistence type="inferred from homology"/>
<gene>
    <name type="primary">dmpG</name>
    <name type="ordered locus">RSp0895</name>
</gene>